<feature type="signal peptide" evidence="2">
    <location>
        <begin position="1"/>
        <end position="15"/>
    </location>
</feature>
<feature type="chain" id="PRO_5015767038" description="Class II hydrophobin 5">
    <location>
        <begin position="16"/>
        <end position="101"/>
    </location>
</feature>
<feature type="disulfide bond" evidence="1">
    <location>
        <begin position="33"/>
        <end position="83"/>
    </location>
</feature>
<feature type="disulfide bond" evidence="1">
    <location>
        <begin position="44"/>
        <end position="74"/>
    </location>
</feature>
<feature type="disulfide bond" evidence="1">
    <location>
        <begin position="45"/>
        <end position="57"/>
    </location>
</feature>
<feature type="disulfide bond" evidence="1">
    <location>
        <begin position="84"/>
        <end position="95"/>
    </location>
</feature>
<evidence type="ECO:0000250" key="1">
    <source>
        <dbReference type="UniProtKB" id="P79073"/>
    </source>
</evidence>
<evidence type="ECO:0000255" key="2"/>
<evidence type="ECO:0000269" key="3">
    <source>
    </source>
</evidence>
<evidence type="ECO:0000303" key="4">
    <source>
    </source>
</evidence>
<evidence type="ECO:0000305" key="5"/>
<comment type="function">
    <text evidence="5">Aerial growth, conidiation, and dispersal of filamentous fungi in the environment rely upon a capability of their secreting small amphipathic proteins called hydrophobins (HPBs) with low sequence identity. Class I can self-assemble into an outermost layer of rodlet bundles on aerial cell surfaces, conferring cellular hydrophobicity that supports fungal growth, development and dispersal; whereas Class II form highly ordered films at water-air interfaces through intermolecular interactions but contribute nothing to the rodlet structure.</text>
</comment>
<comment type="subunit">
    <text evidence="1">Homodimer (By similarity). Homodimers further self-assemble to form highly ordered films at water-air interfaces through intermolecular interactions (By similarity).</text>
</comment>
<comment type="subcellular location">
    <subcellularLocation>
        <location evidence="1">Secreted</location>
    </subcellularLocation>
    <subcellularLocation>
        <location evidence="1">Secreted</location>
        <location evidence="1">Cell wall</location>
    </subcellularLocation>
</comment>
<comment type="induction">
    <text evidence="3">Expression is highly up-regulated in the presence of root and stem powder of Shanxin poplar, but also under carbon or nitrogen starvation.</text>
</comment>
<comment type="similarity">
    <text evidence="5">Belongs to the cerato-ulmin hydrophobin family.</text>
</comment>
<protein>
    <recommendedName>
        <fullName evidence="4">Class II hydrophobin 5</fullName>
    </recommendedName>
</protein>
<reference key="1">
    <citation type="submission" date="2016-07" db="EMBL/GenBank/DDBJ databases">
        <title>Multiple horizontal gene transfer events from other fungi enriched the ability of initially mycotrophic Trichoderma (Ascomycota) to feed on dead plant biomass.</title>
        <authorList>
            <consortium name="DOE Joint Genome Institute"/>
            <person name="Aerts A."/>
            <person name="Atanasova L."/>
            <person name="Chenthamara K."/>
            <person name="Zhang J."/>
            <person name="Grujic M."/>
            <person name="Henrissat B."/>
            <person name="Kuo A."/>
            <person name="Salamov A."/>
            <person name="Lipzen A."/>
            <person name="Labutti K."/>
            <person name="Barry K."/>
            <person name="Miao Y."/>
            <person name="Rahimi M.J."/>
            <person name="Shen Q."/>
            <person name="Grigoriev I.V."/>
            <person name="Kubicek C.P."/>
            <person name="Druzhinina I.S."/>
        </authorList>
    </citation>
    <scope>NUCLEOTIDE SEQUENCE [LARGE SCALE GENOMIC DNA]</scope>
    <source>
        <strain>ATCC 204424 / CBS 433.97 / NBRC 101777</strain>
    </source>
</reference>
<reference key="2">
    <citation type="journal article" date="2015" name="Microbiol. Res.">
        <title>Functional analysis of the class II hydrophobin gene HFB2-6 from the biocontrol agent Trichoderma asperellum ACCC30536.</title>
        <authorList>
            <person name="Huang Y."/>
            <person name="Mijiti G."/>
            <person name="Wang Z."/>
            <person name="Yu W."/>
            <person name="Fan H."/>
            <person name="Zhang R."/>
            <person name="Liu Z."/>
        </authorList>
    </citation>
    <scope>INDUCTION</scope>
</reference>
<name>HFB25_TRIA4</name>
<proteinExistence type="evidence at transcript level"/>
<sequence>MQLTALLALATLAIAAPAEPSEVAPRNVLTGPCSSGVTNSNPQCCGAGILGILYFDCETPDEVSSPINPLKTICAAEGLQAKCCTLGIAGLGVLCTDALPE</sequence>
<keyword id="KW-0134">Cell wall</keyword>
<keyword id="KW-1015">Disulfide bond</keyword>
<keyword id="KW-1185">Reference proteome</keyword>
<keyword id="KW-0964">Secreted</keyword>
<keyword id="KW-0732">Signal</keyword>
<dbReference type="EMBL" id="KZ679260">
    <property type="protein sequence ID" value="PTB42484.1"/>
    <property type="molecule type" value="Genomic_DNA"/>
</dbReference>
<dbReference type="STRING" id="1042311.A0A2T3ZCF4"/>
<dbReference type="OrthoDB" id="4500971at2759"/>
<dbReference type="Proteomes" id="UP000240493">
    <property type="component" value="Unassembled WGS sequence"/>
</dbReference>
<dbReference type="GO" id="GO:0005576">
    <property type="term" value="C:extracellular region"/>
    <property type="evidence" value="ECO:0007669"/>
    <property type="project" value="UniProtKB-KW"/>
</dbReference>
<dbReference type="CDD" id="cd23508">
    <property type="entry name" value="hydrophobin_II"/>
    <property type="match status" value="1"/>
</dbReference>
<dbReference type="Gene3D" id="3.20.120.10">
    <property type="entry name" value="Hydrophobin"/>
    <property type="match status" value="1"/>
</dbReference>
<dbReference type="InterPro" id="IPR010636">
    <property type="entry name" value="Cerato-ulmin_hydrophobin"/>
</dbReference>
<dbReference type="InterPro" id="IPR036686">
    <property type="entry name" value="Hydrophobin_sf"/>
</dbReference>
<dbReference type="PANTHER" id="PTHR42341">
    <property type="entry name" value="HYDROPHOBIN"/>
    <property type="match status" value="1"/>
</dbReference>
<dbReference type="PANTHER" id="PTHR42341:SF1">
    <property type="entry name" value="HYDROPHOBIN"/>
    <property type="match status" value="1"/>
</dbReference>
<dbReference type="Pfam" id="PF06766">
    <property type="entry name" value="Hydrophobin_2"/>
    <property type="match status" value="1"/>
</dbReference>
<dbReference type="SUPFAM" id="SSF101751">
    <property type="entry name" value="Hydrophobin II, HfbII"/>
    <property type="match status" value="1"/>
</dbReference>
<organism>
    <name type="scientific">Trichoderma asperellum (strain ATCC 204424 / CBS 433.97 / NBRC 101777)</name>
    <dbReference type="NCBI Taxonomy" id="1042311"/>
    <lineage>
        <taxon>Eukaryota</taxon>
        <taxon>Fungi</taxon>
        <taxon>Dikarya</taxon>
        <taxon>Ascomycota</taxon>
        <taxon>Pezizomycotina</taxon>
        <taxon>Sordariomycetes</taxon>
        <taxon>Hypocreomycetidae</taxon>
        <taxon>Hypocreales</taxon>
        <taxon>Hypocreaceae</taxon>
        <taxon>Trichoderma</taxon>
    </lineage>
</organism>
<accession>A0A2T3ZCF4</accession>
<gene>
    <name evidence="4" type="primary">HFB2-5</name>
    <name type="ORF">M441DRAFT_57227</name>
</gene>